<keyword id="KW-1015">Disulfide bond</keyword>
<keyword id="KW-0238">DNA-binding</keyword>
<keyword id="KW-0446">Lipid-binding</keyword>
<keyword id="KW-0479">Metal-binding</keyword>
<keyword id="KW-0539">Nucleus</keyword>
<keyword id="KW-1185">Reference proteome</keyword>
<keyword id="KW-0678">Repressor</keyword>
<keyword id="KW-0804">Transcription</keyword>
<keyword id="KW-0805">Transcription regulation</keyword>
<keyword id="KW-0862">Zinc</keyword>
<keyword id="KW-0863">Zinc-finger</keyword>
<dbReference type="EMBL" id="BC110979">
    <property type="protein sequence ID" value="AAI10980.1"/>
    <property type="molecule type" value="mRNA"/>
</dbReference>
<dbReference type="SMR" id="Q2TAD4"/>
<dbReference type="DNASU" id="735024"/>
<dbReference type="GeneID" id="735024"/>
<dbReference type="KEGG" id="xla:735024"/>
<dbReference type="AGR" id="Xenbase:XB-GENE-960207"/>
<dbReference type="CTD" id="735024"/>
<dbReference type="Xenbase" id="XB-GENE-960207">
    <property type="gene designation" value="sap30l.L"/>
</dbReference>
<dbReference type="OMA" id="SDQICCL"/>
<dbReference type="OrthoDB" id="510958at2759"/>
<dbReference type="Proteomes" id="UP000186698">
    <property type="component" value="Chromosome 3L"/>
</dbReference>
<dbReference type="Bgee" id="735024">
    <property type="expression patterns" value="Expressed in internal ear and 19 other cell types or tissues"/>
</dbReference>
<dbReference type="GO" id="GO:0000118">
    <property type="term" value="C:histone deacetylase complex"/>
    <property type="evidence" value="ECO:0000250"/>
    <property type="project" value="UniProtKB"/>
</dbReference>
<dbReference type="GO" id="GO:0005730">
    <property type="term" value="C:nucleolus"/>
    <property type="evidence" value="ECO:0000250"/>
    <property type="project" value="UniProtKB"/>
</dbReference>
<dbReference type="GO" id="GO:0003677">
    <property type="term" value="F:DNA binding"/>
    <property type="evidence" value="ECO:0000250"/>
    <property type="project" value="UniProtKB"/>
</dbReference>
<dbReference type="GO" id="GO:0042393">
    <property type="term" value="F:histone binding"/>
    <property type="evidence" value="ECO:0000250"/>
    <property type="project" value="UniProtKB"/>
</dbReference>
<dbReference type="GO" id="GO:0044378">
    <property type="term" value="F:non-sequence-specific DNA binding, bending"/>
    <property type="evidence" value="ECO:0000250"/>
    <property type="project" value="UniProtKB"/>
</dbReference>
<dbReference type="GO" id="GO:0031491">
    <property type="term" value="F:nucleosome binding"/>
    <property type="evidence" value="ECO:0000250"/>
    <property type="project" value="UniProtKB"/>
</dbReference>
<dbReference type="GO" id="GO:0032266">
    <property type="term" value="F:phosphatidylinositol-3-phosphate binding"/>
    <property type="evidence" value="ECO:0000250"/>
    <property type="project" value="UniProtKB"/>
</dbReference>
<dbReference type="GO" id="GO:0070273">
    <property type="term" value="F:phosphatidylinositol-4-phosphate binding"/>
    <property type="evidence" value="ECO:0000250"/>
    <property type="project" value="UniProtKB"/>
</dbReference>
<dbReference type="GO" id="GO:0010314">
    <property type="term" value="F:phosphatidylinositol-5-phosphate binding"/>
    <property type="evidence" value="ECO:0000250"/>
    <property type="project" value="UniProtKB"/>
</dbReference>
<dbReference type="GO" id="GO:0003712">
    <property type="term" value="F:transcription coregulator activity"/>
    <property type="evidence" value="ECO:0000318"/>
    <property type="project" value="GO_Central"/>
</dbReference>
<dbReference type="GO" id="GO:0008270">
    <property type="term" value="F:zinc ion binding"/>
    <property type="evidence" value="ECO:0000250"/>
    <property type="project" value="UniProtKB"/>
</dbReference>
<dbReference type="GO" id="GO:0000122">
    <property type="term" value="P:negative regulation of transcription by RNA polymerase II"/>
    <property type="evidence" value="ECO:0000250"/>
    <property type="project" value="UniProtKB"/>
</dbReference>
<dbReference type="GO" id="GO:0006355">
    <property type="term" value="P:regulation of DNA-templated transcription"/>
    <property type="evidence" value="ECO:0000318"/>
    <property type="project" value="GO_Central"/>
</dbReference>
<dbReference type="FunFam" id="3.40.1800.30:FF:000001">
    <property type="entry name" value="Histone deacetylase complex subunit"/>
    <property type="match status" value="1"/>
</dbReference>
<dbReference type="Gene3D" id="3.40.1800.30">
    <property type="match status" value="1"/>
</dbReference>
<dbReference type="Gene3D" id="6.10.160.20">
    <property type="match status" value="1"/>
</dbReference>
<dbReference type="InterPro" id="IPR024145">
    <property type="entry name" value="His_deAcase_SAP30/SAP30L"/>
</dbReference>
<dbReference type="InterPro" id="IPR038291">
    <property type="entry name" value="SAP30_C_sf"/>
</dbReference>
<dbReference type="InterPro" id="IPR025718">
    <property type="entry name" value="SAP30_Sin3-bd"/>
</dbReference>
<dbReference type="InterPro" id="IPR025717">
    <property type="entry name" value="SAP30_zn-finger"/>
</dbReference>
<dbReference type="PANTHER" id="PTHR13286:SF5">
    <property type="entry name" value="HISTONE DEACETYLASE COMPLEX SUBUNIT SAP30L"/>
    <property type="match status" value="1"/>
</dbReference>
<dbReference type="PANTHER" id="PTHR13286">
    <property type="entry name" value="SAP30"/>
    <property type="match status" value="1"/>
</dbReference>
<dbReference type="Pfam" id="PF13867">
    <property type="entry name" value="SAP30_Sin3_bdg"/>
    <property type="match status" value="1"/>
</dbReference>
<dbReference type="Pfam" id="PF13866">
    <property type="entry name" value="zf-SAP30"/>
    <property type="match status" value="1"/>
</dbReference>
<sequence length="181" mass="20848">MNGFSTEEDSRDGPPAQAAPFFGQTCCLIDGGERCPRPAGNASFSKRVQKSISQKKLKLDIDKSVRHLYICDFHKNYIQSVRNKRKRKTSDDGGDSPEHETDVPEVDLFQLQVNTLRRYKRYYKLQTRPGLNKAQLAETVSRHFRNIPVNEKETLAYFIYMVKSNRSRLDQKSESSKQLDA</sequence>
<gene>
    <name type="primary">sap30l-b</name>
</gene>
<name>S30LB_XENLA</name>
<evidence type="ECO:0000250" key="1">
    <source>
        <dbReference type="UniProtKB" id="Q9HAJ7"/>
    </source>
</evidence>
<evidence type="ECO:0000255" key="2">
    <source>
        <dbReference type="PROSITE-ProRule" id="PRU00114"/>
    </source>
</evidence>
<evidence type="ECO:0000256" key="3">
    <source>
        <dbReference type="SAM" id="MobiDB-lite"/>
    </source>
</evidence>
<evidence type="ECO:0000305" key="4"/>
<accession>Q2TAD4</accession>
<comment type="function">
    <text evidence="1">Functions as a transcription repressor, probably via its interaction with histone deacetylase complexes. Involved in the functional recruitment of the class 1 Sin3-histone deacetylase complex (HDAC) to the nucleolus. Binds DNA, apparently without sequence-specificity, and bends bound double-stranded DNA. Binds phosphoinositol phosphates (phosphoinositol 3-phosphate, phosphoinositol 4-phosphate and phosphoinositol 5-phosphate) via the same basic sequence motif that mediates DNA binding and nuclear import.</text>
</comment>
<comment type="subunit">
    <text evidence="1">Interacts with components of the histone deacetylase complex sin3a, hdac1 and hdac2. Binds histones and nucleosomes.</text>
</comment>
<comment type="subcellular location">
    <subcellularLocation>
        <location evidence="1">Nucleus</location>
        <location evidence="1">Nucleolus</location>
    </subcellularLocation>
</comment>
<comment type="domain">
    <text evidence="1">The zinc-finger domain mediates direct interaction with DNA and phosphoinositol phosphates (phosphoinositol 3-phosphate, phosphoinositol 4-phosphate and phosphoinositol 5-phosphate). In vitro oxydation causes reversible disulfide bond formation between Cys residues in the zinc-finger domain and reversible loss of zinc ion binding.</text>
</comment>
<comment type="similarity">
    <text evidence="4">Belongs to the SAP30 family.</text>
</comment>
<proteinExistence type="evidence at transcript level"/>
<protein>
    <recommendedName>
        <fullName>Histone deacetylase complex subunit SAP30L-B</fullName>
    </recommendedName>
    <alternativeName>
        <fullName>Sin3 corepressor complex subunit SAP30L-B</fullName>
    </alternativeName>
    <alternativeName>
        <fullName>Sin3-associated protein p30-like B</fullName>
    </alternativeName>
</protein>
<reference key="1">
    <citation type="submission" date="2005-12" db="EMBL/GenBank/DDBJ databases">
        <authorList>
            <consortium name="NIH - Xenopus Gene Collection (XGC) project"/>
        </authorList>
    </citation>
    <scope>NUCLEOTIDE SEQUENCE [LARGE SCALE MRNA]</scope>
    <source>
        <tissue>Embryo</tissue>
    </source>
</reference>
<feature type="chain" id="PRO_0000309504" description="Histone deacetylase complex subunit SAP30L-B">
    <location>
        <begin position="1"/>
        <end position="181"/>
    </location>
</feature>
<feature type="zinc finger region" description="Atypical">
    <location>
        <begin position="26"/>
        <end position="74"/>
    </location>
</feature>
<feature type="region of interest" description="Disordered" evidence="3">
    <location>
        <begin position="82"/>
        <end position="103"/>
    </location>
</feature>
<feature type="region of interest" description="Important for DNA and phosphoinositide binding" evidence="1">
    <location>
        <begin position="85"/>
        <end position="87"/>
    </location>
</feature>
<feature type="short sequence motif" description="Nuclear localization signal (NLS)" evidence="1">
    <location>
        <begin position="83"/>
        <end position="88"/>
    </location>
</feature>
<feature type="disulfide bond" description="Redox-active" evidence="2">
    <location>
        <begin position="26"/>
        <end position="27"/>
    </location>
</feature>
<feature type="disulfide bond" description="Redox-active" evidence="2">
    <location>
        <begin position="35"/>
        <end position="71"/>
    </location>
</feature>
<organism>
    <name type="scientific">Xenopus laevis</name>
    <name type="common">African clawed frog</name>
    <dbReference type="NCBI Taxonomy" id="8355"/>
    <lineage>
        <taxon>Eukaryota</taxon>
        <taxon>Metazoa</taxon>
        <taxon>Chordata</taxon>
        <taxon>Craniata</taxon>
        <taxon>Vertebrata</taxon>
        <taxon>Euteleostomi</taxon>
        <taxon>Amphibia</taxon>
        <taxon>Batrachia</taxon>
        <taxon>Anura</taxon>
        <taxon>Pipoidea</taxon>
        <taxon>Pipidae</taxon>
        <taxon>Xenopodinae</taxon>
        <taxon>Xenopus</taxon>
        <taxon>Xenopus</taxon>
    </lineage>
</organism>